<gene>
    <name evidence="1" type="primary">ulaE</name>
    <name type="ordered locus">E2348C_4520</name>
</gene>
<sequence length="284" mass="32035">MLSKQIPLGIYEKALPAGECWLERLQLAKTLGFDFVEMSVDETDDRLSRLDWSREQRLALVNAIVETGVRVPSMCLSAHRRFPLGSEDDAVRAQGLEIMRKAIQFAQDVGIRVIQLAGYDVYYQEANNETRRRFRDGLKESVEMASRAQVTLAMEIMDYPLMNSISKALGYAHYLNNPWFQLYPDIGNLSAWDNDVQMELQAGIGHIVAVHVKDTKPGVFKNVPFGEGVVDFERCFETLKQSGYCGPYLIEMWSETAEDPAAEVAKARDWVKARMAKAGMVEAA</sequence>
<protein>
    <recommendedName>
        <fullName evidence="1">L-ribulose-5-phosphate 3-epimerase UlaE</fullName>
        <ecNumber evidence="1">5.1.3.22</ecNumber>
    </recommendedName>
    <alternativeName>
        <fullName evidence="1">L-ascorbate utilization protein E</fullName>
    </alternativeName>
    <alternativeName>
        <fullName evidence="1">L-xylulose-5-phosphate 3-epimerase</fullName>
    </alternativeName>
</protein>
<organism>
    <name type="scientific">Escherichia coli O127:H6 (strain E2348/69 / EPEC)</name>
    <dbReference type="NCBI Taxonomy" id="574521"/>
    <lineage>
        <taxon>Bacteria</taxon>
        <taxon>Pseudomonadati</taxon>
        <taxon>Pseudomonadota</taxon>
        <taxon>Gammaproteobacteria</taxon>
        <taxon>Enterobacterales</taxon>
        <taxon>Enterobacteriaceae</taxon>
        <taxon>Escherichia</taxon>
    </lineage>
</organism>
<name>ULAE_ECO27</name>
<accession>B7UQK6</accession>
<feature type="chain" id="PRO_1000188820" description="L-ribulose-5-phosphate 3-epimerase UlaE">
    <location>
        <begin position="1"/>
        <end position="284"/>
    </location>
</feature>
<keyword id="KW-0413">Isomerase</keyword>
<keyword id="KW-1185">Reference proteome</keyword>
<evidence type="ECO:0000255" key="1">
    <source>
        <dbReference type="HAMAP-Rule" id="MF_01951"/>
    </source>
</evidence>
<comment type="function">
    <text evidence="1">Catalyzes the isomerization of L-xylulose-5-phosphate to L-ribulose-5-phosphate. Is involved in the anaerobic L-ascorbate utilization.</text>
</comment>
<comment type="catalytic activity">
    <reaction evidence="1">
        <text>L-ribulose 5-phosphate = L-xylulose 5-phosphate</text>
        <dbReference type="Rhea" id="RHEA:18497"/>
        <dbReference type="ChEBI" id="CHEBI:57829"/>
        <dbReference type="ChEBI" id="CHEBI:58226"/>
        <dbReference type="EC" id="5.1.3.22"/>
    </reaction>
</comment>
<comment type="pathway">
    <text evidence="1">Cofactor degradation; L-ascorbate degradation; D-xylulose 5-phosphate from L-ascorbate: step 3/4.</text>
</comment>
<comment type="induction">
    <text evidence="1">Induced by L-ascorbate. Repressed by UlaR.</text>
</comment>
<comment type="similarity">
    <text evidence="1">Belongs to the L-ribulose-5-phosphate 3-epimerase family.</text>
</comment>
<dbReference type="EC" id="5.1.3.22" evidence="1"/>
<dbReference type="EMBL" id="FM180568">
    <property type="protein sequence ID" value="CAS12068.1"/>
    <property type="molecule type" value="Genomic_DNA"/>
</dbReference>
<dbReference type="RefSeq" id="WP_000949498.1">
    <property type="nucleotide sequence ID" value="NC_011601.1"/>
</dbReference>
<dbReference type="SMR" id="B7UQK6"/>
<dbReference type="GeneID" id="86861409"/>
<dbReference type="KEGG" id="ecg:E2348C_4520"/>
<dbReference type="HOGENOM" id="CLU_082738_0_0_6"/>
<dbReference type="UniPathway" id="UPA00263">
    <property type="reaction ID" value="UER00379"/>
</dbReference>
<dbReference type="Proteomes" id="UP000008205">
    <property type="component" value="Chromosome"/>
</dbReference>
<dbReference type="GO" id="GO:0016861">
    <property type="term" value="F:intramolecular oxidoreductase activity, interconverting aldoses and ketoses"/>
    <property type="evidence" value="ECO:0007669"/>
    <property type="project" value="InterPro"/>
</dbReference>
<dbReference type="GO" id="GO:0034015">
    <property type="term" value="F:L-ribulose-5-phosphate 3-epimerase activity"/>
    <property type="evidence" value="ECO:0007669"/>
    <property type="project" value="UniProtKB-UniRule"/>
</dbReference>
<dbReference type="GO" id="GO:0019854">
    <property type="term" value="P:L-ascorbic acid catabolic process"/>
    <property type="evidence" value="ECO:0007669"/>
    <property type="project" value="UniProtKB-UniRule"/>
</dbReference>
<dbReference type="FunFam" id="3.20.20.150:FF:000003">
    <property type="entry name" value="L-ribulose-5-phosphate 3-epimerase UlaE"/>
    <property type="match status" value="1"/>
</dbReference>
<dbReference type="Gene3D" id="3.20.20.150">
    <property type="entry name" value="Divalent-metal-dependent TIM barrel enzymes"/>
    <property type="match status" value="1"/>
</dbReference>
<dbReference type="HAMAP" id="MF_01951">
    <property type="entry name" value="UlaE"/>
    <property type="match status" value="1"/>
</dbReference>
<dbReference type="InterPro" id="IPR004560">
    <property type="entry name" value="L-Ru-5P_3-Epase"/>
</dbReference>
<dbReference type="InterPro" id="IPR023492">
    <property type="entry name" value="L-Ru-5P_3-Epase_Enterobacteria"/>
</dbReference>
<dbReference type="InterPro" id="IPR050417">
    <property type="entry name" value="Sugar_Epim/Isomerase"/>
</dbReference>
<dbReference type="InterPro" id="IPR036237">
    <property type="entry name" value="Xyl_isomerase-like_sf"/>
</dbReference>
<dbReference type="InterPro" id="IPR013022">
    <property type="entry name" value="Xyl_isomerase-like_TIM-brl"/>
</dbReference>
<dbReference type="NCBIfam" id="TIGR00542">
    <property type="entry name" value="hxl6Piso_put"/>
    <property type="match status" value="1"/>
</dbReference>
<dbReference type="NCBIfam" id="NF009688">
    <property type="entry name" value="PRK13209.1"/>
    <property type="match status" value="1"/>
</dbReference>
<dbReference type="NCBIfam" id="NF009689">
    <property type="entry name" value="PRK13210.1"/>
    <property type="match status" value="1"/>
</dbReference>
<dbReference type="PANTHER" id="PTHR43489">
    <property type="entry name" value="ISOMERASE"/>
    <property type="match status" value="1"/>
</dbReference>
<dbReference type="PANTHER" id="PTHR43489:SF8">
    <property type="entry name" value="L-RIBULOSE-5-PHOSPHATE 3-EPIMERASE ULAE"/>
    <property type="match status" value="1"/>
</dbReference>
<dbReference type="Pfam" id="PF01261">
    <property type="entry name" value="AP_endonuc_2"/>
    <property type="match status" value="1"/>
</dbReference>
<dbReference type="SUPFAM" id="SSF51658">
    <property type="entry name" value="Xylose isomerase-like"/>
    <property type="match status" value="1"/>
</dbReference>
<proteinExistence type="inferred from homology"/>
<reference key="1">
    <citation type="journal article" date="2009" name="J. Bacteriol.">
        <title>Complete genome sequence and comparative genome analysis of enteropathogenic Escherichia coli O127:H6 strain E2348/69.</title>
        <authorList>
            <person name="Iguchi A."/>
            <person name="Thomson N.R."/>
            <person name="Ogura Y."/>
            <person name="Saunders D."/>
            <person name="Ooka T."/>
            <person name="Henderson I.R."/>
            <person name="Harris D."/>
            <person name="Asadulghani M."/>
            <person name="Kurokawa K."/>
            <person name="Dean P."/>
            <person name="Kenny B."/>
            <person name="Quail M.A."/>
            <person name="Thurston S."/>
            <person name="Dougan G."/>
            <person name="Hayashi T."/>
            <person name="Parkhill J."/>
            <person name="Frankel G."/>
        </authorList>
    </citation>
    <scope>NUCLEOTIDE SEQUENCE [LARGE SCALE GENOMIC DNA]</scope>
    <source>
        <strain>E2348/69 / EPEC</strain>
    </source>
</reference>